<comment type="function">
    <text>Associated with the oxygen-evolving complex of photosystem II.</text>
</comment>
<comment type="subcellular location">
    <subcellularLocation>
        <location>Plastid</location>
        <location>Chloroplast thylakoid membrane</location>
    </subcellularLocation>
    <text>Associated with the photosystem II complex.</text>
</comment>
<comment type="similarity">
    <text evidence="3">Belongs to the psbR family.</text>
</comment>
<accession>P49108</accession>
<keyword id="KW-0150">Chloroplast</keyword>
<keyword id="KW-0472">Membrane</keyword>
<keyword id="KW-0597">Phosphoprotein</keyword>
<keyword id="KW-0602">Photosynthesis</keyword>
<keyword id="KW-0604">Photosystem II</keyword>
<keyword id="KW-0934">Plastid</keyword>
<keyword id="KW-1185">Reference proteome</keyword>
<keyword id="KW-0793">Thylakoid</keyword>
<keyword id="KW-0809">Transit peptide</keyword>
<dbReference type="EMBL" id="L31936">
    <property type="protein sequence ID" value="AAA74957.1"/>
    <property type="molecule type" value="mRNA"/>
</dbReference>
<dbReference type="SMR" id="P49108"/>
<dbReference type="EnsemblPlants" id="A07p29210.2_BraZ1">
    <property type="protein sequence ID" value="A07p29210.2_BraZ1.CDS"/>
    <property type="gene ID" value="A07g29210.2_BraZ1"/>
</dbReference>
<dbReference type="EnsemblPlants" id="Bra003624.1">
    <property type="protein sequence ID" value="Bra003624.1-P"/>
    <property type="gene ID" value="Bra003624"/>
</dbReference>
<dbReference type="GeneID" id="103830498"/>
<dbReference type="Gramene" id="A07p29210.2_BraZ1">
    <property type="protein sequence ID" value="A07p29210.2_BraZ1.CDS"/>
    <property type="gene ID" value="A07g29210.2_BraZ1"/>
</dbReference>
<dbReference type="Gramene" id="Bra003624.1">
    <property type="protein sequence ID" value="Bra003624.1-P"/>
    <property type="gene ID" value="Bra003624"/>
</dbReference>
<dbReference type="KEGG" id="brp:103830498"/>
<dbReference type="OMA" id="MAICAVM"/>
<dbReference type="OrthoDB" id="1079647at2759"/>
<dbReference type="Proteomes" id="UP000011750">
    <property type="component" value="Chromosome A07"/>
</dbReference>
<dbReference type="GO" id="GO:0009535">
    <property type="term" value="C:chloroplast thylakoid membrane"/>
    <property type="evidence" value="ECO:0007669"/>
    <property type="project" value="UniProtKB-SubCell"/>
</dbReference>
<dbReference type="GO" id="GO:0009654">
    <property type="term" value="C:photosystem II oxygen evolving complex"/>
    <property type="evidence" value="ECO:0007669"/>
    <property type="project" value="InterPro"/>
</dbReference>
<dbReference type="GO" id="GO:0015979">
    <property type="term" value="P:photosynthesis"/>
    <property type="evidence" value="ECO:0007669"/>
    <property type="project" value="UniProtKB-KW"/>
</dbReference>
<dbReference type="InterPro" id="IPR006814">
    <property type="entry name" value="PSII_PsbR"/>
</dbReference>
<dbReference type="PANTHER" id="PTHR34369">
    <property type="entry name" value="PHOTOSYSTEM II 10 KDA POLYPEPTIDE, CHLOROPLASTIC"/>
    <property type="match status" value="1"/>
</dbReference>
<dbReference type="PANTHER" id="PTHR34369:SF2">
    <property type="entry name" value="PHOTOSYSTEM II 10 KDA POLYPEPTIDE, CHLOROPLASTIC"/>
    <property type="match status" value="1"/>
</dbReference>
<dbReference type="Pfam" id="PF04725">
    <property type="entry name" value="PsbR"/>
    <property type="match status" value="1"/>
</dbReference>
<evidence type="ECO:0000250" key="1"/>
<evidence type="ECO:0000250" key="2">
    <source>
        <dbReference type="UniProtKB" id="P27202"/>
    </source>
</evidence>
<evidence type="ECO:0000305" key="3"/>
<organism>
    <name type="scientific">Brassica campestris</name>
    <name type="common">Field mustard</name>
    <dbReference type="NCBI Taxonomy" id="3711"/>
    <lineage>
        <taxon>Eukaryota</taxon>
        <taxon>Viridiplantae</taxon>
        <taxon>Streptophyta</taxon>
        <taxon>Embryophyta</taxon>
        <taxon>Tracheophyta</taxon>
        <taxon>Spermatophyta</taxon>
        <taxon>Magnoliopsida</taxon>
        <taxon>eudicotyledons</taxon>
        <taxon>Gunneridae</taxon>
        <taxon>Pentapetalae</taxon>
        <taxon>rosids</taxon>
        <taxon>malvids</taxon>
        <taxon>Brassicales</taxon>
        <taxon>Brassicaceae</taxon>
        <taxon>Brassiceae</taxon>
        <taxon>Brassica</taxon>
    </lineage>
</organism>
<sequence>MAASVMLSSVTLKPAGFTVEKMSARGLPSLTRASPSSFRIVASGVKKIKTDKPFGVNGSMDLRDGVDASGRKGKGYGVYKFVDKYGANVDGYSPIYNEDEWSASGDVYKGGVTGLAIWAVTLAGILAGGALLVYNTSALAQ</sequence>
<protein>
    <recommendedName>
        <fullName>Photosystem II 10 kDa polypeptide, chloroplastic</fullName>
    </recommendedName>
</protein>
<reference key="1">
    <citation type="journal article" date="1995" name="Plant Physiol.">
        <title>Nucleotide sequence of a cDNA clone encoding the complete precursor for the '10-kilodalton' polypeptide of photosystem II from Chinese cabbage.</title>
        <authorList>
            <person name="Kim H.U."/>
            <person name="Yun C.H."/>
            <person name="Park B.S."/>
            <person name="Ryu J.C."/>
            <person name="Chung T.Y."/>
        </authorList>
    </citation>
    <scope>NUCLEOTIDE SEQUENCE [MRNA]</scope>
    <source>
        <strain>cv. Pekinensis</strain>
    </source>
</reference>
<gene>
    <name type="primary">PSBR</name>
</gene>
<feature type="transit peptide" description="Chloroplast" evidence="1">
    <location>
        <begin position="1"/>
        <end position="42"/>
    </location>
</feature>
<feature type="chain" id="PRO_0000029361" description="Photosystem II 10 kDa polypeptide, chloroplastic">
    <location>
        <begin position="43"/>
        <end position="141"/>
    </location>
</feature>
<feature type="modified residue" description="Phosphoserine" evidence="2">
    <location>
        <position position="59"/>
    </location>
</feature>
<proteinExistence type="evidence at transcript level"/>
<name>PSBR_BRACM</name>